<keyword id="KW-0963">Cytoplasm</keyword>
<keyword id="KW-0489">Methyltransferase</keyword>
<keyword id="KW-1185">Reference proteome</keyword>
<keyword id="KW-0949">S-adenosyl-L-methionine</keyword>
<keyword id="KW-0808">Transferase</keyword>
<keyword id="KW-0819">tRNA processing</keyword>
<accession>Q6AEA3</accession>
<comment type="function">
    <text evidence="1">Specifically methylates guanosine-37 in various tRNAs.</text>
</comment>
<comment type="catalytic activity">
    <reaction evidence="1">
        <text>guanosine(37) in tRNA + S-adenosyl-L-methionine = N(1)-methylguanosine(37) in tRNA + S-adenosyl-L-homocysteine + H(+)</text>
        <dbReference type="Rhea" id="RHEA:36899"/>
        <dbReference type="Rhea" id="RHEA-COMP:10145"/>
        <dbReference type="Rhea" id="RHEA-COMP:10147"/>
        <dbReference type="ChEBI" id="CHEBI:15378"/>
        <dbReference type="ChEBI" id="CHEBI:57856"/>
        <dbReference type="ChEBI" id="CHEBI:59789"/>
        <dbReference type="ChEBI" id="CHEBI:73542"/>
        <dbReference type="ChEBI" id="CHEBI:74269"/>
        <dbReference type="EC" id="2.1.1.228"/>
    </reaction>
</comment>
<comment type="subunit">
    <text evidence="1">Homodimer.</text>
</comment>
<comment type="subcellular location">
    <subcellularLocation>
        <location evidence="1">Cytoplasm</location>
    </subcellularLocation>
</comment>
<comment type="similarity">
    <text evidence="1">Belongs to the RNA methyltransferase TrmD family.</text>
</comment>
<sequence length="227" mass="24595">MRIDIVTIFPTFFDVLDISLLGKARQTGRIALGVHDLRDHTHDRHRTVDDTPYGGGAGMVMKPGPWGEALDGVLDGAEDPVVIFPSPAGEPFTQAMARELAGEQHLVFGCGRYEGIDQRVFDDAASHARVRLVSLGDYVLNGGEVATMAMIEAVGRLIPGVVGNPESLVQESHGDGLLEYPSYTKPAEWRGRAVPPVLLSGNHGAIAAWRREQSVARTERVRPDLLP</sequence>
<proteinExistence type="inferred from homology"/>
<organism>
    <name type="scientific">Leifsonia xyli subsp. xyli (strain CTCB07)</name>
    <dbReference type="NCBI Taxonomy" id="281090"/>
    <lineage>
        <taxon>Bacteria</taxon>
        <taxon>Bacillati</taxon>
        <taxon>Actinomycetota</taxon>
        <taxon>Actinomycetes</taxon>
        <taxon>Micrococcales</taxon>
        <taxon>Microbacteriaceae</taxon>
        <taxon>Leifsonia</taxon>
    </lineage>
</organism>
<name>TRMD_LEIXX</name>
<dbReference type="EC" id="2.1.1.228" evidence="1"/>
<dbReference type="EMBL" id="AE016822">
    <property type="protein sequence ID" value="AAT89293.1"/>
    <property type="molecule type" value="Genomic_DNA"/>
</dbReference>
<dbReference type="RefSeq" id="WP_011186284.1">
    <property type="nucleotide sequence ID" value="NC_006087.1"/>
</dbReference>
<dbReference type="SMR" id="Q6AEA3"/>
<dbReference type="STRING" id="281090.Lxx14850"/>
<dbReference type="KEGG" id="lxx:Lxx14850"/>
<dbReference type="eggNOG" id="COG0336">
    <property type="taxonomic scope" value="Bacteria"/>
</dbReference>
<dbReference type="HOGENOM" id="CLU_047363_0_0_11"/>
<dbReference type="Proteomes" id="UP000001306">
    <property type="component" value="Chromosome"/>
</dbReference>
<dbReference type="GO" id="GO:0005829">
    <property type="term" value="C:cytosol"/>
    <property type="evidence" value="ECO:0007669"/>
    <property type="project" value="TreeGrafter"/>
</dbReference>
<dbReference type="GO" id="GO:0052906">
    <property type="term" value="F:tRNA (guanine(37)-N1)-methyltransferase activity"/>
    <property type="evidence" value="ECO:0007669"/>
    <property type="project" value="UniProtKB-UniRule"/>
</dbReference>
<dbReference type="GO" id="GO:0002939">
    <property type="term" value="P:tRNA N1-guanine methylation"/>
    <property type="evidence" value="ECO:0007669"/>
    <property type="project" value="TreeGrafter"/>
</dbReference>
<dbReference type="CDD" id="cd18080">
    <property type="entry name" value="TrmD-like"/>
    <property type="match status" value="1"/>
</dbReference>
<dbReference type="FunFam" id="3.40.1280.10:FF:000001">
    <property type="entry name" value="tRNA (guanine-N(1)-)-methyltransferase"/>
    <property type="match status" value="1"/>
</dbReference>
<dbReference type="Gene3D" id="3.40.1280.10">
    <property type="match status" value="1"/>
</dbReference>
<dbReference type="Gene3D" id="1.10.1270.20">
    <property type="entry name" value="tRNA(m1g37)methyltransferase, domain 2"/>
    <property type="match status" value="1"/>
</dbReference>
<dbReference type="HAMAP" id="MF_00605">
    <property type="entry name" value="TrmD"/>
    <property type="match status" value="1"/>
</dbReference>
<dbReference type="InterPro" id="IPR029028">
    <property type="entry name" value="Alpha/beta_knot_MTases"/>
</dbReference>
<dbReference type="InterPro" id="IPR023148">
    <property type="entry name" value="tRNA_m1G_MeTrfase_C_sf"/>
</dbReference>
<dbReference type="InterPro" id="IPR002649">
    <property type="entry name" value="tRNA_m1G_MeTrfase_TrmD"/>
</dbReference>
<dbReference type="InterPro" id="IPR029026">
    <property type="entry name" value="tRNA_m1G_MTases_N"/>
</dbReference>
<dbReference type="InterPro" id="IPR016009">
    <property type="entry name" value="tRNA_MeTrfase_TRMD/TRM10"/>
</dbReference>
<dbReference type="NCBIfam" id="NF000648">
    <property type="entry name" value="PRK00026.1"/>
    <property type="match status" value="1"/>
</dbReference>
<dbReference type="NCBIfam" id="TIGR00088">
    <property type="entry name" value="trmD"/>
    <property type="match status" value="1"/>
</dbReference>
<dbReference type="PANTHER" id="PTHR46417">
    <property type="entry name" value="TRNA (GUANINE-N(1)-)-METHYLTRANSFERASE"/>
    <property type="match status" value="1"/>
</dbReference>
<dbReference type="PANTHER" id="PTHR46417:SF1">
    <property type="entry name" value="TRNA (GUANINE-N(1)-)-METHYLTRANSFERASE"/>
    <property type="match status" value="1"/>
</dbReference>
<dbReference type="Pfam" id="PF01746">
    <property type="entry name" value="tRNA_m1G_MT"/>
    <property type="match status" value="1"/>
</dbReference>
<dbReference type="PIRSF" id="PIRSF000386">
    <property type="entry name" value="tRNA_mtase"/>
    <property type="match status" value="1"/>
</dbReference>
<dbReference type="SUPFAM" id="SSF75217">
    <property type="entry name" value="alpha/beta knot"/>
    <property type="match status" value="1"/>
</dbReference>
<protein>
    <recommendedName>
        <fullName evidence="1">tRNA (guanine-N(1)-)-methyltransferase</fullName>
        <ecNumber evidence="1">2.1.1.228</ecNumber>
    </recommendedName>
    <alternativeName>
        <fullName evidence="1">M1G-methyltransferase</fullName>
    </alternativeName>
    <alternativeName>
        <fullName evidence="1">tRNA [GM37] methyltransferase</fullName>
    </alternativeName>
</protein>
<gene>
    <name evidence="1" type="primary">trmD</name>
    <name type="ordered locus">Lxx14850</name>
</gene>
<reference key="1">
    <citation type="journal article" date="2004" name="Mol. Plant Microbe Interact.">
        <title>The genome sequence of the Gram-positive sugarcane pathogen Leifsonia xyli subsp. xyli.</title>
        <authorList>
            <person name="Monteiro-Vitorello C.B."/>
            <person name="Camargo L.E.A."/>
            <person name="Van Sluys M.A."/>
            <person name="Kitajima J.P."/>
            <person name="Truffi D."/>
            <person name="do Amaral A.M."/>
            <person name="Harakava R."/>
            <person name="de Oliveira J.C.F."/>
            <person name="Wood D."/>
            <person name="de Oliveira M.C."/>
            <person name="Miyaki C.Y."/>
            <person name="Takita M.A."/>
            <person name="da Silva A.C.R."/>
            <person name="Furlan L.R."/>
            <person name="Carraro D.M."/>
            <person name="Camarotte G."/>
            <person name="Almeida N.F. Jr."/>
            <person name="Carrer H."/>
            <person name="Coutinho L.L."/>
            <person name="El-Dorry H.A."/>
            <person name="Ferro M.I.T."/>
            <person name="Gagliardi P.R."/>
            <person name="Giglioti E."/>
            <person name="Goldman M.H.S."/>
            <person name="Goldman G.H."/>
            <person name="Kimura E.T."/>
            <person name="Ferro E.S."/>
            <person name="Kuramae E.E."/>
            <person name="Lemos E.G.M."/>
            <person name="Lemos M.V.F."/>
            <person name="Mauro S.M.Z."/>
            <person name="Machado M.A."/>
            <person name="Marino C.L."/>
            <person name="Menck C.F."/>
            <person name="Nunes L.R."/>
            <person name="Oliveira R.C."/>
            <person name="Pereira G.G."/>
            <person name="Siqueira W."/>
            <person name="de Souza A.A."/>
            <person name="Tsai S.M."/>
            <person name="Zanca A.S."/>
            <person name="Simpson A.J.G."/>
            <person name="Brumbley S.M."/>
            <person name="Setubal J.C."/>
        </authorList>
    </citation>
    <scope>NUCLEOTIDE SEQUENCE [LARGE SCALE GENOMIC DNA]</scope>
    <source>
        <strain>CTCB07</strain>
    </source>
</reference>
<evidence type="ECO:0000255" key="1">
    <source>
        <dbReference type="HAMAP-Rule" id="MF_00605"/>
    </source>
</evidence>
<feature type="chain" id="PRO_0000060398" description="tRNA (guanine-N(1)-)-methyltransferase">
    <location>
        <begin position="1"/>
        <end position="227"/>
    </location>
</feature>
<feature type="binding site" evidence="1">
    <location>
        <position position="111"/>
    </location>
    <ligand>
        <name>S-adenosyl-L-methionine</name>
        <dbReference type="ChEBI" id="CHEBI:59789"/>
    </ligand>
</feature>
<feature type="binding site" evidence="1">
    <location>
        <begin position="135"/>
        <end position="140"/>
    </location>
    <ligand>
        <name>S-adenosyl-L-methionine</name>
        <dbReference type="ChEBI" id="CHEBI:59789"/>
    </ligand>
</feature>